<evidence type="ECO:0000255" key="1">
    <source>
        <dbReference type="HAMAP-Rule" id="MF_01025"/>
    </source>
</evidence>
<organism>
    <name type="scientific">Pelotomaculum thermopropionicum (strain DSM 13744 / JCM 10971 / SI)</name>
    <dbReference type="NCBI Taxonomy" id="370438"/>
    <lineage>
        <taxon>Bacteria</taxon>
        <taxon>Bacillati</taxon>
        <taxon>Bacillota</taxon>
        <taxon>Clostridia</taxon>
        <taxon>Eubacteriales</taxon>
        <taxon>Desulfotomaculaceae</taxon>
        <taxon>Pelotomaculum</taxon>
    </lineage>
</organism>
<gene>
    <name evidence="1" type="primary">leuA</name>
    <name type="ordered locus">PTH_0531</name>
</gene>
<feature type="chain" id="PRO_1000149234" description="2-isopropylmalate synthase">
    <location>
        <begin position="1"/>
        <end position="505"/>
    </location>
</feature>
<feature type="domain" description="Pyruvate carboxyltransferase" evidence="1">
    <location>
        <begin position="5"/>
        <end position="267"/>
    </location>
</feature>
<feature type="region of interest" description="Regulatory domain" evidence="1">
    <location>
        <begin position="391"/>
        <end position="505"/>
    </location>
</feature>
<feature type="binding site" evidence="1">
    <location>
        <position position="14"/>
    </location>
    <ligand>
        <name>Mn(2+)</name>
        <dbReference type="ChEBI" id="CHEBI:29035"/>
    </ligand>
</feature>
<feature type="binding site" evidence="1">
    <location>
        <position position="202"/>
    </location>
    <ligand>
        <name>Mn(2+)</name>
        <dbReference type="ChEBI" id="CHEBI:29035"/>
    </ligand>
</feature>
<feature type="binding site" evidence="1">
    <location>
        <position position="204"/>
    </location>
    <ligand>
        <name>Mn(2+)</name>
        <dbReference type="ChEBI" id="CHEBI:29035"/>
    </ligand>
</feature>
<feature type="binding site" evidence="1">
    <location>
        <position position="238"/>
    </location>
    <ligand>
        <name>Mn(2+)</name>
        <dbReference type="ChEBI" id="CHEBI:29035"/>
    </ligand>
</feature>
<name>LEU1_PELTS</name>
<accession>A5D4W0</accession>
<comment type="function">
    <text evidence="1">Catalyzes the condensation of the acetyl group of acetyl-CoA with 3-methyl-2-oxobutanoate (2-ketoisovalerate) to form 3-carboxy-3-hydroxy-4-methylpentanoate (2-isopropylmalate).</text>
</comment>
<comment type="catalytic activity">
    <reaction evidence="1">
        <text>3-methyl-2-oxobutanoate + acetyl-CoA + H2O = (2S)-2-isopropylmalate + CoA + H(+)</text>
        <dbReference type="Rhea" id="RHEA:21524"/>
        <dbReference type="ChEBI" id="CHEBI:1178"/>
        <dbReference type="ChEBI" id="CHEBI:11851"/>
        <dbReference type="ChEBI" id="CHEBI:15377"/>
        <dbReference type="ChEBI" id="CHEBI:15378"/>
        <dbReference type="ChEBI" id="CHEBI:57287"/>
        <dbReference type="ChEBI" id="CHEBI:57288"/>
        <dbReference type="EC" id="2.3.3.13"/>
    </reaction>
</comment>
<comment type="cofactor">
    <cofactor evidence="1">
        <name>Mn(2+)</name>
        <dbReference type="ChEBI" id="CHEBI:29035"/>
    </cofactor>
</comment>
<comment type="pathway">
    <text evidence="1">Amino-acid biosynthesis; L-leucine biosynthesis; L-leucine from 3-methyl-2-oxobutanoate: step 1/4.</text>
</comment>
<comment type="subunit">
    <text evidence="1">Homodimer.</text>
</comment>
<comment type="subcellular location">
    <subcellularLocation>
        <location evidence="1">Cytoplasm</location>
    </subcellularLocation>
</comment>
<comment type="similarity">
    <text evidence="1">Belongs to the alpha-IPM synthase/homocitrate synthase family. LeuA type 1 subfamily.</text>
</comment>
<proteinExistence type="inferred from homology"/>
<keyword id="KW-0028">Amino-acid biosynthesis</keyword>
<keyword id="KW-0100">Branched-chain amino acid biosynthesis</keyword>
<keyword id="KW-0963">Cytoplasm</keyword>
<keyword id="KW-0432">Leucine biosynthesis</keyword>
<keyword id="KW-0464">Manganese</keyword>
<keyword id="KW-0479">Metal-binding</keyword>
<keyword id="KW-1185">Reference proteome</keyword>
<keyword id="KW-0808">Transferase</keyword>
<dbReference type="EC" id="2.3.3.13" evidence="1"/>
<dbReference type="EMBL" id="AP009389">
    <property type="protein sequence ID" value="BAF58712.1"/>
    <property type="molecule type" value="Genomic_DNA"/>
</dbReference>
<dbReference type="SMR" id="A5D4W0"/>
<dbReference type="STRING" id="370438.PTH_0531"/>
<dbReference type="KEGG" id="pth:PTH_0531"/>
<dbReference type="eggNOG" id="COG0119">
    <property type="taxonomic scope" value="Bacteria"/>
</dbReference>
<dbReference type="HOGENOM" id="CLU_022158_0_1_9"/>
<dbReference type="UniPathway" id="UPA00048">
    <property type="reaction ID" value="UER00070"/>
</dbReference>
<dbReference type="Proteomes" id="UP000006556">
    <property type="component" value="Chromosome"/>
</dbReference>
<dbReference type="GO" id="GO:0005737">
    <property type="term" value="C:cytoplasm"/>
    <property type="evidence" value="ECO:0007669"/>
    <property type="project" value="UniProtKB-SubCell"/>
</dbReference>
<dbReference type="GO" id="GO:0003852">
    <property type="term" value="F:2-isopropylmalate synthase activity"/>
    <property type="evidence" value="ECO:0007669"/>
    <property type="project" value="UniProtKB-UniRule"/>
</dbReference>
<dbReference type="GO" id="GO:0003985">
    <property type="term" value="F:acetyl-CoA C-acetyltransferase activity"/>
    <property type="evidence" value="ECO:0007669"/>
    <property type="project" value="UniProtKB-UniRule"/>
</dbReference>
<dbReference type="GO" id="GO:0030145">
    <property type="term" value="F:manganese ion binding"/>
    <property type="evidence" value="ECO:0007669"/>
    <property type="project" value="UniProtKB-UniRule"/>
</dbReference>
<dbReference type="GO" id="GO:0009098">
    <property type="term" value="P:L-leucine biosynthetic process"/>
    <property type="evidence" value="ECO:0007669"/>
    <property type="project" value="UniProtKB-UniRule"/>
</dbReference>
<dbReference type="CDD" id="cd07940">
    <property type="entry name" value="DRE_TIM_IPMS"/>
    <property type="match status" value="1"/>
</dbReference>
<dbReference type="FunFam" id="1.10.238.260:FF:000001">
    <property type="entry name" value="2-isopropylmalate synthase"/>
    <property type="match status" value="1"/>
</dbReference>
<dbReference type="FunFam" id="3.20.20.70:FF:000010">
    <property type="entry name" value="2-isopropylmalate synthase"/>
    <property type="match status" value="1"/>
</dbReference>
<dbReference type="FunFam" id="3.30.160.270:FF:000001">
    <property type="entry name" value="2-isopropylmalate synthase"/>
    <property type="match status" value="1"/>
</dbReference>
<dbReference type="Gene3D" id="1.10.238.260">
    <property type="match status" value="1"/>
</dbReference>
<dbReference type="Gene3D" id="3.30.160.270">
    <property type="match status" value="1"/>
</dbReference>
<dbReference type="Gene3D" id="3.20.20.70">
    <property type="entry name" value="Aldolase class I"/>
    <property type="match status" value="1"/>
</dbReference>
<dbReference type="HAMAP" id="MF_01025">
    <property type="entry name" value="LeuA_type1"/>
    <property type="match status" value="1"/>
</dbReference>
<dbReference type="InterPro" id="IPR050073">
    <property type="entry name" value="2-IPM_HCS-like"/>
</dbReference>
<dbReference type="InterPro" id="IPR013709">
    <property type="entry name" value="2-isopropylmalate_synth_dimer"/>
</dbReference>
<dbReference type="InterPro" id="IPR002034">
    <property type="entry name" value="AIPM/Hcit_synth_CS"/>
</dbReference>
<dbReference type="InterPro" id="IPR013785">
    <property type="entry name" value="Aldolase_TIM"/>
</dbReference>
<dbReference type="InterPro" id="IPR054691">
    <property type="entry name" value="LeuA/HCS_post-cat"/>
</dbReference>
<dbReference type="InterPro" id="IPR036230">
    <property type="entry name" value="LeuA_allosteric_dom_sf"/>
</dbReference>
<dbReference type="InterPro" id="IPR005671">
    <property type="entry name" value="LeuA_bact_synth"/>
</dbReference>
<dbReference type="InterPro" id="IPR000891">
    <property type="entry name" value="PYR_CT"/>
</dbReference>
<dbReference type="NCBIfam" id="TIGR00973">
    <property type="entry name" value="leuA_bact"/>
    <property type="match status" value="1"/>
</dbReference>
<dbReference type="NCBIfam" id="NF002085">
    <property type="entry name" value="PRK00915.1-2"/>
    <property type="match status" value="1"/>
</dbReference>
<dbReference type="NCBIfam" id="NF002086">
    <property type="entry name" value="PRK00915.1-3"/>
    <property type="match status" value="1"/>
</dbReference>
<dbReference type="NCBIfam" id="NF002087">
    <property type="entry name" value="PRK00915.1-4"/>
    <property type="match status" value="1"/>
</dbReference>
<dbReference type="NCBIfam" id="NF002088">
    <property type="entry name" value="PRK00915.1-5"/>
    <property type="match status" value="1"/>
</dbReference>
<dbReference type="PANTHER" id="PTHR10277:SF9">
    <property type="entry name" value="2-ISOPROPYLMALATE SYNTHASE 1, CHLOROPLASTIC-RELATED"/>
    <property type="match status" value="1"/>
</dbReference>
<dbReference type="PANTHER" id="PTHR10277">
    <property type="entry name" value="HOMOCITRATE SYNTHASE-RELATED"/>
    <property type="match status" value="1"/>
</dbReference>
<dbReference type="Pfam" id="PF22617">
    <property type="entry name" value="HCS_D2"/>
    <property type="match status" value="1"/>
</dbReference>
<dbReference type="Pfam" id="PF00682">
    <property type="entry name" value="HMGL-like"/>
    <property type="match status" value="1"/>
</dbReference>
<dbReference type="Pfam" id="PF08502">
    <property type="entry name" value="LeuA_dimer"/>
    <property type="match status" value="1"/>
</dbReference>
<dbReference type="SMART" id="SM00917">
    <property type="entry name" value="LeuA_dimer"/>
    <property type="match status" value="1"/>
</dbReference>
<dbReference type="SUPFAM" id="SSF110921">
    <property type="entry name" value="2-isopropylmalate synthase LeuA, allosteric (dimerisation) domain"/>
    <property type="match status" value="1"/>
</dbReference>
<dbReference type="SUPFAM" id="SSF51569">
    <property type="entry name" value="Aldolase"/>
    <property type="match status" value="1"/>
</dbReference>
<dbReference type="PROSITE" id="PS00815">
    <property type="entry name" value="AIPM_HOMOCIT_SYNTH_1"/>
    <property type="match status" value="1"/>
</dbReference>
<dbReference type="PROSITE" id="PS00816">
    <property type="entry name" value="AIPM_HOMOCIT_SYNTH_2"/>
    <property type="match status" value="1"/>
</dbReference>
<dbReference type="PROSITE" id="PS50991">
    <property type="entry name" value="PYR_CT"/>
    <property type="match status" value="1"/>
</dbReference>
<sequence length="505" mass="55085">MSQRVYIFDTTLRDGEQSPGVSLNVGEKVQIARQLAKLGVDIIEAGFPITSPGDFKAVSEIARQVKGVTVAALARANFQDIDRAWEAVRHAEQPRIHTFIATSDIHLKYKLRMSREEVLDAAVAAVKRARAYTGDVEFSAEDASRSDLDFLCRVLAAAIEAGATVINIPDTVGYAVPEEWGKFINTIYHKVPGIEKVIVSVHCHNDLGMAVANSLAAVMNGARQVEGAINGIGERAGNAAIEEMVMALYTRKDQYNLYTNIKTEEIYRTSKLVSALTGMKVQPNKAVVGKNAFAHEAGIHQDGVLKERTTYEIMNPAMVGISKSNLVLGKHSGRHAFRHRLEEMGYNLSDEELNSAFERFKKLADKKMEITDEDLEAIIEEEMRLVPHTYTLEYLHISSGTTVVPTATVGLKRDGQLMEEAACGNGPVDAICKAIDKITGLNCTMTSWGINAVTAGKDALGDVSLKVTADGEKVYVGRGISTDVLEASAKAYVNAVNKLIWDSQK</sequence>
<protein>
    <recommendedName>
        <fullName evidence="1">2-isopropylmalate synthase</fullName>
        <ecNumber evidence="1">2.3.3.13</ecNumber>
    </recommendedName>
    <alternativeName>
        <fullName evidence="1">Alpha-IPM synthase</fullName>
    </alternativeName>
    <alternativeName>
        <fullName evidence="1">Alpha-isopropylmalate synthase</fullName>
    </alternativeName>
</protein>
<reference key="1">
    <citation type="journal article" date="2008" name="Genome Res.">
        <title>The genome of Pelotomaculum thermopropionicum reveals niche-associated evolution in anaerobic microbiota.</title>
        <authorList>
            <person name="Kosaka T."/>
            <person name="Kato S."/>
            <person name="Shimoyama T."/>
            <person name="Ishii S."/>
            <person name="Abe T."/>
            <person name="Watanabe K."/>
        </authorList>
    </citation>
    <scope>NUCLEOTIDE SEQUENCE [LARGE SCALE GENOMIC DNA]</scope>
    <source>
        <strain>DSM 13744 / JCM 10971 / SI</strain>
    </source>
</reference>